<comment type="catalytic activity">
    <reaction evidence="1">
        <text>adenine + H2O + H(+) = hypoxanthine + NH4(+)</text>
        <dbReference type="Rhea" id="RHEA:23688"/>
        <dbReference type="ChEBI" id="CHEBI:15377"/>
        <dbReference type="ChEBI" id="CHEBI:15378"/>
        <dbReference type="ChEBI" id="CHEBI:16708"/>
        <dbReference type="ChEBI" id="CHEBI:17368"/>
        <dbReference type="ChEBI" id="CHEBI:28938"/>
        <dbReference type="EC" id="3.5.4.2"/>
    </reaction>
</comment>
<comment type="cofactor">
    <cofactor evidence="1">
        <name>Mn(2+)</name>
        <dbReference type="ChEBI" id="CHEBI:29035"/>
    </cofactor>
</comment>
<comment type="similarity">
    <text evidence="1">Belongs to the metallo-dependent hydrolases superfamily. Adenine deaminase family.</text>
</comment>
<feature type="chain" id="PRO_0000142425" description="Adenine deaminase">
    <location>
        <begin position="1"/>
        <end position="565"/>
    </location>
</feature>
<protein>
    <recommendedName>
        <fullName evidence="1">Adenine deaminase</fullName>
        <shortName evidence="1">Adenase</shortName>
        <shortName evidence="1">Adenine aminase</shortName>
        <ecNumber evidence="1">3.5.4.2</ecNumber>
    </recommendedName>
</protein>
<name>ADEC_GLUOX</name>
<dbReference type="EC" id="3.5.4.2" evidence="1"/>
<dbReference type="EMBL" id="CP000009">
    <property type="protein sequence ID" value="AAW61459.1"/>
    <property type="molecule type" value="Genomic_DNA"/>
</dbReference>
<dbReference type="RefSeq" id="WP_011253241.1">
    <property type="nucleotide sequence ID" value="NC_006677.1"/>
</dbReference>
<dbReference type="SMR" id="Q5FQ87"/>
<dbReference type="STRING" id="290633.GOX1719"/>
<dbReference type="KEGG" id="gox:GOX1719"/>
<dbReference type="eggNOG" id="COG1001">
    <property type="taxonomic scope" value="Bacteria"/>
</dbReference>
<dbReference type="HOGENOM" id="CLU_027935_0_0_5"/>
<dbReference type="Proteomes" id="UP000006375">
    <property type="component" value="Chromosome"/>
</dbReference>
<dbReference type="GO" id="GO:0000034">
    <property type="term" value="F:adenine deaminase activity"/>
    <property type="evidence" value="ECO:0007669"/>
    <property type="project" value="UniProtKB-UniRule"/>
</dbReference>
<dbReference type="GO" id="GO:0006146">
    <property type="term" value="P:adenine catabolic process"/>
    <property type="evidence" value="ECO:0007669"/>
    <property type="project" value="InterPro"/>
</dbReference>
<dbReference type="CDD" id="cd01295">
    <property type="entry name" value="AdeC"/>
    <property type="match status" value="1"/>
</dbReference>
<dbReference type="Gene3D" id="3.20.20.140">
    <property type="entry name" value="Metal-dependent hydrolases"/>
    <property type="match status" value="1"/>
</dbReference>
<dbReference type="Gene3D" id="2.30.40.10">
    <property type="entry name" value="Urease, subunit C, domain 1"/>
    <property type="match status" value="1"/>
</dbReference>
<dbReference type="HAMAP" id="MF_01518">
    <property type="entry name" value="Adenine_deamin"/>
    <property type="match status" value="1"/>
</dbReference>
<dbReference type="InterPro" id="IPR006679">
    <property type="entry name" value="Adenine_deam"/>
</dbReference>
<dbReference type="InterPro" id="IPR026912">
    <property type="entry name" value="Adenine_deam_C"/>
</dbReference>
<dbReference type="InterPro" id="IPR006680">
    <property type="entry name" value="Amidohydro-rel"/>
</dbReference>
<dbReference type="InterPro" id="IPR011059">
    <property type="entry name" value="Metal-dep_hydrolase_composite"/>
</dbReference>
<dbReference type="InterPro" id="IPR032466">
    <property type="entry name" value="Metal_Hydrolase"/>
</dbReference>
<dbReference type="NCBIfam" id="TIGR01178">
    <property type="entry name" value="ade"/>
    <property type="match status" value="1"/>
</dbReference>
<dbReference type="PANTHER" id="PTHR11113:SF2">
    <property type="entry name" value="ADENINE DEAMINASE"/>
    <property type="match status" value="1"/>
</dbReference>
<dbReference type="PANTHER" id="PTHR11113">
    <property type="entry name" value="N-ACETYLGLUCOSAMINE-6-PHOSPHATE DEACETYLASE"/>
    <property type="match status" value="1"/>
</dbReference>
<dbReference type="Pfam" id="PF13382">
    <property type="entry name" value="Adenine_deam_C"/>
    <property type="match status" value="1"/>
</dbReference>
<dbReference type="Pfam" id="PF01979">
    <property type="entry name" value="Amidohydro_1"/>
    <property type="match status" value="1"/>
</dbReference>
<dbReference type="SUPFAM" id="SSF51338">
    <property type="entry name" value="Composite domain of metallo-dependent hydrolases"/>
    <property type="match status" value="1"/>
</dbReference>
<dbReference type="SUPFAM" id="SSF51556">
    <property type="entry name" value="Metallo-dependent hydrolases"/>
    <property type="match status" value="1"/>
</dbReference>
<keyword id="KW-0378">Hydrolase</keyword>
<keyword id="KW-0464">Manganese</keyword>
<keyword id="KW-1185">Reference proteome</keyword>
<sequence length="565" mass="60564">MQKTIMRRVAQGQGHEPVDLVIKNVRLFDLVTGDLIPTDIAICGDRIVGTYGEYEGVQAIDGAGRIAVPGFIDTHLHVESSLVTPFEFDRCVLPHGVTTAICDPHEMANVLGRAAFDYFLAAAERTIMDLRVNLSSCVPATSMETSGAVLNVDDLVAYRHHPKVIGLAEFMNIPGVLNGDPGCVDKLAAFADGHIDGHAPLMCGKALNGYLAAGISTDHEATAADEALEKVRKGMTVLIREGSVCKDLEALVPLLNVATSPFFAFCTDDRNPLEIAHEGHLDFLIRRAIELGVEPLAAYRAASLSAATAFGLRDRGQIAPGKRADIVLLDDLERCQVSDVISAGRLVNDALFNSREIVSPVGLESVKLPRPVTAQDMAVEGSGRDRPVMGVIPGQIITEFLRLDLPEDHGHVLPDPEQDVAKVCVVARHGHNDNIGRGFVRGFGLKEGALASSVGHDSHNICVVGTSDADMACAVNHLEKTGGGFVAVRNGQVLADLCLPVAGLMSDAPYEQVRDDLIILRKAAKTMGVVLEEPFLQLAFLPLPVIPHLKITDFGMIDVRTMSFV</sequence>
<proteinExistence type="inferred from homology"/>
<gene>
    <name evidence="1" type="primary">ade</name>
    <name type="ordered locus">GOX1719</name>
</gene>
<reference key="1">
    <citation type="journal article" date="2005" name="Nat. Biotechnol.">
        <title>Complete genome sequence of the acetic acid bacterium Gluconobacter oxydans.</title>
        <authorList>
            <person name="Prust C."/>
            <person name="Hoffmeister M."/>
            <person name="Liesegang H."/>
            <person name="Wiezer A."/>
            <person name="Fricke W.F."/>
            <person name="Ehrenreich A."/>
            <person name="Gottschalk G."/>
            <person name="Deppenmeier U."/>
        </authorList>
    </citation>
    <scope>NUCLEOTIDE SEQUENCE [LARGE SCALE GENOMIC DNA]</scope>
    <source>
        <strain>621H</strain>
    </source>
</reference>
<organism>
    <name type="scientific">Gluconobacter oxydans (strain 621H)</name>
    <name type="common">Gluconobacter suboxydans</name>
    <dbReference type="NCBI Taxonomy" id="290633"/>
    <lineage>
        <taxon>Bacteria</taxon>
        <taxon>Pseudomonadati</taxon>
        <taxon>Pseudomonadota</taxon>
        <taxon>Alphaproteobacteria</taxon>
        <taxon>Acetobacterales</taxon>
        <taxon>Acetobacteraceae</taxon>
        <taxon>Gluconobacter</taxon>
    </lineage>
</organism>
<evidence type="ECO:0000255" key="1">
    <source>
        <dbReference type="HAMAP-Rule" id="MF_01518"/>
    </source>
</evidence>
<accession>Q5FQ87</accession>